<gene>
    <name evidence="4" type="primary">rtxC</name>
</gene>
<proteinExistence type="evidence at protein level"/>
<organism>
    <name type="scientific">Kingella kingae</name>
    <dbReference type="NCBI Taxonomy" id="504"/>
    <lineage>
        <taxon>Bacteria</taxon>
        <taxon>Pseudomonadati</taxon>
        <taxon>Pseudomonadota</taxon>
        <taxon>Betaproteobacteria</taxon>
        <taxon>Neisseriales</taxon>
        <taxon>Neisseriaceae</taxon>
        <taxon>Kingella</taxon>
    </lineage>
</organism>
<accession>A1YKW8</accession>
<protein>
    <recommendedName>
        <fullName evidence="5">Protein-lysine myristoyltransferase RtxC</fullName>
        <ecNumber evidence="3 6">2.3.1.-</ecNumber>
    </recommendedName>
</protein>
<dbReference type="EC" id="2.3.1.-" evidence="3 6"/>
<dbReference type="EMBL" id="EF067866">
    <property type="protein sequence ID" value="ABK58602.1"/>
    <property type="molecule type" value="Genomic_DNA"/>
</dbReference>
<dbReference type="RefSeq" id="WP_026036190.1">
    <property type="nucleotide sequence ID" value="NZ_UGJI01000001.1"/>
</dbReference>
<dbReference type="SMR" id="A1YKW8"/>
<dbReference type="GO" id="GO:0005737">
    <property type="term" value="C:cytoplasm"/>
    <property type="evidence" value="ECO:0007669"/>
    <property type="project" value="UniProtKB-SubCell"/>
</dbReference>
<dbReference type="GO" id="GO:0018030">
    <property type="term" value="F:peptidyl-lysine N6-myristoyltransferase activity"/>
    <property type="evidence" value="ECO:0000314"/>
    <property type="project" value="UniProtKB"/>
</dbReference>
<dbReference type="GO" id="GO:0009404">
    <property type="term" value="P:toxin metabolic process"/>
    <property type="evidence" value="ECO:0007669"/>
    <property type="project" value="InterPro"/>
</dbReference>
<dbReference type="InterPro" id="IPR003996">
    <property type="entry name" value="RTX_toxin-activating_protC_bac"/>
</dbReference>
<dbReference type="Pfam" id="PF02794">
    <property type="entry name" value="HlyC"/>
    <property type="match status" value="1"/>
</dbReference>
<dbReference type="PRINTS" id="PR01489">
    <property type="entry name" value="RTXTOXINC"/>
</dbReference>
<comment type="function">
    <text evidence="2 3">Protein-lysine myristoyltransferase that catalyzes myristoylation of the protoxin (RtxA) at two internal lysine residues, thereby converting it to the active toxin.</text>
</comment>
<comment type="catalytic activity">
    <reaction evidence="3 6">
        <text>tetradecanoyl-[ACP] + L-lysyl-[protein] = N(6)-tetradecanoyl-L-lysyl-[protein] + holo-[ACP] + H(+)</text>
        <dbReference type="Rhea" id="RHEA:70611"/>
        <dbReference type="Rhea" id="RHEA-COMP:9648"/>
        <dbReference type="Rhea" id="RHEA-COMP:9685"/>
        <dbReference type="Rhea" id="RHEA-COMP:9752"/>
        <dbReference type="Rhea" id="RHEA-COMP:15437"/>
        <dbReference type="ChEBI" id="CHEBI:15378"/>
        <dbReference type="ChEBI" id="CHEBI:29969"/>
        <dbReference type="ChEBI" id="CHEBI:64479"/>
        <dbReference type="ChEBI" id="CHEBI:78477"/>
        <dbReference type="ChEBI" id="CHEBI:141129"/>
    </reaction>
    <physiologicalReaction direction="left-to-right" evidence="3 6">
        <dbReference type="Rhea" id="RHEA:70612"/>
    </physiologicalReaction>
</comment>
<comment type="subcellular location">
    <subcellularLocation>
        <location evidence="5">Cytoplasm</location>
    </subcellularLocation>
</comment>
<comment type="similarity">
    <text evidence="5">Belongs to the RTX toxin acyltransferase family.</text>
</comment>
<sequence length="167" mass="19406">MDKFSELGSIAWLWTNSELHQNWPLSLFSTNVIPAIETQQYVLLVRDGMPIAYCSWARLNLETEVKYINDVTSLKLEDWQSGDRYWFIDWIAPFGDSYLLTKHMRKLFSDGLFRAIRVDAGSPNGKISEFYGRNVDAKLAMQSFEQYQKELMNALSQQDNFIISTSK</sequence>
<keyword id="KW-0012">Acyltransferase</keyword>
<keyword id="KW-0963">Cytoplasm</keyword>
<keyword id="KW-0808">Transferase</keyword>
<keyword id="KW-0843">Virulence</keyword>
<reference key="1">
    <citation type="journal article" date="2007" name="J. Bacteriol.">
        <title>Identification and characterization of an RTX toxin in the emerging pathogen Kingella kingae.</title>
        <authorList>
            <person name="Kehl-Fie T.E."/>
            <person name="St Geme J.W. III"/>
        </authorList>
    </citation>
    <scope>NUCLEOTIDE SEQUENCE [GENOMIC DNA]</scope>
    <source>
        <strain>269-492</strain>
    </source>
</reference>
<reference key="2">
    <citation type="journal article" date="2018" name="Emerg. Microbes Infect.">
        <title>Cytotoxic activity of Kingella kingae RtxA toxin depends on post-translational acylation of lysine residues and cholesterol binding.</title>
        <authorList>
            <person name="Osickova A."/>
            <person name="Balashova N."/>
            <person name="Masin J."/>
            <person name="Sulc M."/>
            <person name="Roderova J."/>
            <person name="Wald T."/>
            <person name="Brown A.C."/>
            <person name="Koufos E."/>
            <person name="Chang E.H."/>
            <person name="Giannakakis A."/>
            <person name="Lally E.T."/>
            <person name="Osicka R."/>
        </authorList>
    </citation>
    <scope>FUNCTION</scope>
    <scope>CATALYTIC ACTIVITY</scope>
</reference>
<reference key="3">
    <citation type="journal article" date="2020" name="J. Biol. Chem.">
        <title>Acyltransferase-mediated selection of the length of the fatty acyl chain and of the acylation site governs activation of bacterial RTX toxins.</title>
        <authorList>
            <person name="Osickova A."/>
            <person name="Khaliq H."/>
            <person name="Masin J."/>
            <person name="Jurnecka D."/>
            <person name="Sukova A."/>
            <person name="Fiser R."/>
            <person name="Holubova J."/>
            <person name="Stanek O."/>
            <person name="Sebo P."/>
            <person name="Osicka R."/>
        </authorList>
    </citation>
    <scope>FUNCTION</scope>
    <scope>CATALYTIC ACTIVITY</scope>
</reference>
<name>RTXC_KINKI</name>
<evidence type="ECO:0000250" key="1">
    <source>
        <dbReference type="UniProtKB" id="P55132"/>
    </source>
</evidence>
<evidence type="ECO:0000269" key="2">
    <source>
    </source>
</evidence>
<evidence type="ECO:0000269" key="3">
    <source>
    </source>
</evidence>
<evidence type="ECO:0000303" key="4">
    <source>
    </source>
</evidence>
<evidence type="ECO:0000305" key="5"/>
<evidence type="ECO:0000305" key="6">
    <source>
    </source>
</evidence>
<feature type="chain" id="PRO_0000455663" description="Protein-lysine myristoyltransferase RtxC">
    <location>
        <begin position="1"/>
        <end position="167"/>
    </location>
</feature>
<feature type="active site" evidence="1">
    <location>
        <position position="20"/>
    </location>
</feature>
<feature type="active site" evidence="1">
    <location>
        <position position="89"/>
    </location>
</feature>